<dbReference type="EC" id="1.-.-.-" evidence="8"/>
<dbReference type="EMBL" id="LC646903">
    <property type="protein sequence ID" value="BDA39151.1"/>
    <property type="molecule type" value="Genomic_DNA"/>
</dbReference>
<dbReference type="GO" id="GO:0016020">
    <property type="term" value="C:membrane"/>
    <property type="evidence" value="ECO:0007669"/>
    <property type="project" value="UniProtKB-SubCell"/>
</dbReference>
<dbReference type="GO" id="GO:0016491">
    <property type="term" value="F:oxidoreductase activity"/>
    <property type="evidence" value="ECO:0007669"/>
    <property type="project" value="UniProtKB-KW"/>
</dbReference>
<dbReference type="GO" id="GO:0043386">
    <property type="term" value="P:mycotoxin biosynthetic process"/>
    <property type="evidence" value="ECO:0007669"/>
    <property type="project" value="InterPro"/>
</dbReference>
<dbReference type="InterPro" id="IPR021765">
    <property type="entry name" value="UstYa-like"/>
</dbReference>
<dbReference type="PANTHER" id="PTHR33365:SF4">
    <property type="entry name" value="CYCLOCHLOROTINE BIOSYNTHESIS PROTEIN O"/>
    <property type="match status" value="1"/>
</dbReference>
<dbReference type="PANTHER" id="PTHR33365">
    <property type="entry name" value="YALI0B05434P"/>
    <property type="match status" value="1"/>
</dbReference>
<dbReference type="Pfam" id="PF11807">
    <property type="entry name" value="UstYa"/>
    <property type="match status" value="1"/>
</dbReference>
<feature type="chain" id="PRO_0000458340" description="UstYa family oxidase phomYd">
    <location>
        <begin position="1"/>
        <end position="301"/>
    </location>
</feature>
<feature type="transmembrane region" description="Helical" evidence="2">
    <location>
        <begin position="47"/>
        <end position="69"/>
    </location>
</feature>
<feature type="region of interest" description="Disordered" evidence="4">
    <location>
        <begin position="1"/>
        <end position="26"/>
    </location>
</feature>
<feature type="short sequence motif" description="HXXHC 1" evidence="1">
    <location>
        <begin position="189"/>
        <end position="194"/>
    </location>
</feature>
<feature type="short sequence motif" description="HXXHC 2" evidence="1">
    <location>
        <begin position="218"/>
        <end position="222"/>
    </location>
</feature>
<feature type="glycosylation site" description="N-linked (GlcNAc...) asparagine" evidence="3">
    <location>
        <position position="275"/>
    </location>
</feature>
<name>PHYD1_DIALO</name>
<organism>
    <name type="scientific">Diaporthe leptostromiformis</name>
    <name type="common">Lupinosis disease fungus</name>
    <name type="synonym">Phomopsis leptostromiformis</name>
    <dbReference type="NCBI Taxonomy" id="291059"/>
    <lineage>
        <taxon>Eukaryota</taxon>
        <taxon>Fungi</taxon>
        <taxon>Dikarya</taxon>
        <taxon>Ascomycota</taxon>
        <taxon>Pezizomycotina</taxon>
        <taxon>Sordariomycetes</taxon>
        <taxon>Sordariomycetidae</taxon>
        <taxon>Diaporthales</taxon>
        <taxon>Diaporthaceae</taxon>
        <taxon>Diaporthe</taxon>
    </lineage>
</organism>
<protein>
    <recommendedName>
        <fullName evidence="6">UstYa family oxidase phomYd</fullName>
        <ecNumber evidence="8">1.-.-.-</ecNumber>
    </recommendedName>
    <alternativeName>
        <fullName evidence="6">Phomopsin biosynthesis cluster protein Yd</fullName>
    </alternativeName>
</protein>
<accession>A0A8J9R8Y7</accession>
<gene>
    <name evidence="6" type="primary">phomYd</name>
</gene>
<reference key="1">
    <citation type="journal article" date="2021" name="Angew. Chem. Int. Ed.">
        <title>Biosynthetic studies of phomopsins unveil posttranslational installation of dehydroamino acids by ustYa family proteins.</title>
        <authorList>
            <person name="Sogahata K."/>
            <person name="Ozaki T."/>
            <person name="Igarashi Y."/>
            <person name="Naganuma Y."/>
            <person name="Liu C."/>
            <person name="Minami A."/>
            <person name="Oikawa H."/>
        </authorList>
    </citation>
    <scope>NUCLEOTIDE SEQUENCE [GENOMIC DNA]</scope>
    <scope>FUNCTION</scope>
    <scope>DISRUPTION PHENOTYPE</scope>
    <scope>PATHWAY</scope>
    <source>
        <strain>ATCC 26115 / IMI 115107 / C 1557</strain>
    </source>
</reference>
<evidence type="ECO:0000250" key="1">
    <source>
        <dbReference type="UniProtKB" id="B8NM67"/>
    </source>
</evidence>
<evidence type="ECO:0000255" key="2"/>
<evidence type="ECO:0000255" key="3">
    <source>
        <dbReference type="PROSITE-ProRule" id="PRU00498"/>
    </source>
</evidence>
<evidence type="ECO:0000256" key="4">
    <source>
        <dbReference type="SAM" id="MobiDB-lite"/>
    </source>
</evidence>
<evidence type="ECO:0000269" key="5">
    <source>
    </source>
</evidence>
<evidence type="ECO:0000303" key="6">
    <source>
    </source>
</evidence>
<evidence type="ECO:0000305" key="7"/>
<evidence type="ECO:0000305" key="8">
    <source>
    </source>
</evidence>
<comment type="function">
    <text evidence="5 8">UstYa family oxidase; part of the gene cluster that mediates the biosynthesis of the phomopsins, a group of hexapeptide mycotoxins which infects lupins and causes lupinosis disease in livestock (PubMed:34608734). Within the pathway, phomYd catalyzes the desaturation of the Asp moiety into 2,3-dehydroaspartic acid (dAsp) (PubMed:34608734). The pathway starts with the processing of the precursor phomA by several endopeptidases including kexin proteases as well as the cluster-specific S41 family peptidase phomP1 and the oligopeptidase phomG to produce 10 identical copies of the hexapeptide Tyr-Val-Ile-Pro-Ile-Asp. After being excised from the precursor peptide, the core peptides are cyclized and modified post-translationally by enzymes encoded within the gene cluster. The timing and order of proteolysis of the phomA precursor and PTMs are still unknown. Two tyrosinase-like enzymes, phomQ1 and phomQ2, catalyze the chlorination and hydroxylation of Tyr, respectively. PhomYb, is proposed to be involved in the construction of the macrocyclic structure. The other 4 ustYa family proteins may be involved in PTMs that generate the unique structure of phomopsin A. PhomYa is required for the hydroxylation of C-beta of Tyr. PhomYc, phomYd, and phomYe are responsible for the biosynthesis of 2,3-dehydroisoleucine (dIle), 2,3-dehydroaspartic acid (dAsp), and 3,4-dehydroproline (dPro), respectively. While dIle formation by phomYc is indispensable for the installation of dAsp by phomYd, the order of the other PTMs have not been elucidated yet. Most of the biosynthetic enzymes likely have broad substrate specificity, and thus, there might be a metabolic grid from a precursor to phomopsin A. The enzyme(s) responsible for the biosynthesis of 3,4-dehydrovaline (dVal) have also not been identified yet. Finally, phomM acts as an S-adenosylmethionine-dependent alpha-N-methyltransferase that catalyzes two successive N-methylation reactions, converting N-desmethyl-phomopsin A to phomopsin A and phomopsin A further to an N,N-dimethylated congener called phomopsin E (Probable).</text>
</comment>
<comment type="pathway">
    <text evidence="5">Mycotoxin biosynthesis.</text>
</comment>
<comment type="subcellular location">
    <subcellularLocation>
        <location evidence="2">Membrane</location>
        <topology evidence="2">Single-pass membrane protein</topology>
    </subcellularLocation>
</comment>
<comment type="domain">
    <text evidence="1">The 2 HXXHC motifs are conserved in ustYa family proteins and might form active sites.</text>
</comment>
<comment type="disruption phenotype">
    <text evidence="5">Abolishes the formation of phomopsin A and leads to the accumulation an intermediate with no modified Asp moiety.</text>
</comment>
<comment type="similarity">
    <text evidence="7">Belongs to the ustYa family.</text>
</comment>
<keyword id="KW-0325">Glycoprotein</keyword>
<keyword id="KW-0472">Membrane</keyword>
<keyword id="KW-0560">Oxidoreductase</keyword>
<keyword id="KW-0812">Transmembrane</keyword>
<keyword id="KW-1133">Transmembrane helix</keyword>
<keyword id="KW-0843">Virulence</keyword>
<sequence>MEKFFSPSRHNYADLSPTDVPASEESDEALEEKQFEYFQQRQHRRLVLVNRLLAASTVALVMVSLWLGWELHTAKFGSMGSFQYGFKYELEAAKKVIKLEEYKFLGSPIFLDDGTELVPEPTPGPMKTLGVTDMYVGEPSKELDWNWNQLHWGRFFLLTEDEARQAWGPGYKEYWAENEGGYIAGLEVTHSVHCVDMLRKALRRDVYPLDSPLHGPIHTDHCLNHLRQMILCQGDLTPIPSKYYRGITDNYIFGDMPHTCRNWDSVREFITDRFNGSSAVPLAPGTVLSDPYKKLLGILDE</sequence>
<proteinExistence type="inferred from homology"/>